<protein>
    <recommendedName>
        <fullName evidence="1">Large ribosomal subunit protein uL3</fullName>
    </recommendedName>
    <alternativeName>
        <fullName evidence="3">50S ribosomal protein L3</fullName>
    </alternativeName>
</protein>
<comment type="function">
    <text evidence="1">One of the primary rRNA binding proteins, it binds directly near the 3'-end of the 23S rRNA, where it nucleates assembly of the 50S subunit.</text>
</comment>
<comment type="subunit">
    <text evidence="1">Part of the 50S ribosomal subunit. Forms a cluster with proteins L14 and L19.</text>
</comment>
<comment type="similarity">
    <text evidence="1">Belongs to the universal ribosomal protein uL3 family.</text>
</comment>
<gene>
    <name evidence="1" type="primary">rplC</name>
    <name type="ordered locus">Dgeo_1867</name>
</gene>
<reference key="1">
    <citation type="submission" date="2006-04" db="EMBL/GenBank/DDBJ databases">
        <title>Complete sequence of chromosome of Deinococcus geothermalis DSM 11300.</title>
        <authorList>
            <person name="Copeland A."/>
            <person name="Lucas S."/>
            <person name="Lapidus A."/>
            <person name="Barry K."/>
            <person name="Detter J.C."/>
            <person name="Glavina del Rio T."/>
            <person name="Hammon N."/>
            <person name="Israni S."/>
            <person name="Dalin E."/>
            <person name="Tice H."/>
            <person name="Pitluck S."/>
            <person name="Brettin T."/>
            <person name="Bruce D."/>
            <person name="Han C."/>
            <person name="Tapia R."/>
            <person name="Saunders E."/>
            <person name="Gilna P."/>
            <person name="Schmutz J."/>
            <person name="Larimer F."/>
            <person name="Land M."/>
            <person name="Hauser L."/>
            <person name="Kyrpides N."/>
            <person name="Kim E."/>
            <person name="Daly M.J."/>
            <person name="Fredrickson J.K."/>
            <person name="Makarova K.S."/>
            <person name="Gaidamakova E.K."/>
            <person name="Zhai M."/>
            <person name="Richardson P."/>
        </authorList>
    </citation>
    <scope>NUCLEOTIDE SEQUENCE [LARGE SCALE GENOMIC DNA]</scope>
    <source>
        <strain>DSM 11300 / CIP 105573 / AG-3a</strain>
    </source>
</reference>
<feature type="chain" id="PRO_1000067560" description="Large ribosomal subunit protein uL3">
    <location>
        <begin position="1"/>
        <end position="207"/>
    </location>
</feature>
<feature type="region of interest" description="Disordered" evidence="2">
    <location>
        <begin position="126"/>
        <end position="149"/>
    </location>
</feature>
<name>RL3_DEIGD</name>
<keyword id="KW-0687">Ribonucleoprotein</keyword>
<keyword id="KW-0689">Ribosomal protein</keyword>
<keyword id="KW-0694">RNA-binding</keyword>
<keyword id="KW-0699">rRNA-binding</keyword>
<proteinExistence type="inferred from homology"/>
<dbReference type="EMBL" id="CP000359">
    <property type="protein sequence ID" value="ABF46162.1"/>
    <property type="molecule type" value="Genomic_DNA"/>
</dbReference>
<dbReference type="RefSeq" id="WP_011530992.1">
    <property type="nucleotide sequence ID" value="NC_008025.1"/>
</dbReference>
<dbReference type="SMR" id="Q1IX72"/>
<dbReference type="STRING" id="319795.Dgeo_1867"/>
<dbReference type="KEGG" id="dge:Dgeo_1867"/>
<dbReference type="eggNOG" id="COG0087">
    <property type="taxonomic scope" value="Bacteria"/>
</dbReference>
<dbReference type="HOGENOM" id="CLU_044142_4_1_0"/>
<dbReference type="Proteomes" id="UP000002431">
    <property type="component" value="Chromosome"/>
</dbReference>
<dbReference type="GO" id="GO:0022625">
    <property type="term" value="C:cytosolic large ribosomal subunit"/>
    <property type="evidence" value="ECO:0007669"/>
    <property type="project" value="TreeGrafter"/>
</dbReference>
<dbReference type="GO" id="GO:0019843">
    <property type="term" value="F:rRNA binding"/>
    <property type="evidence" value="ECO:0007669"/>
    <property type="project" value="UniProtKB-UniRule"/>
</dbReference>
<dbReference type="GO" id="GO:0003735">
    <property type="term" value="F:structural constituent of ribosome"/>
    <property type="evidence" value="ECO:0007669"/>
    <property type="project" value="InterPro"/>
</dbReference>
<dbReference type="GO" id="GO:0006412">
    <property type="term" value="P:translation"/>
    <property type="evidence" value="ECO:0007669"/>
    <property type="project" value="UniProtKB-UniRule"/>
</dbReference>
<dbReference type="FunFam" id="2.40.30.10:FF:000004">
    <property type="entry name" value="50S ribosomal protein L3"/>
    <property type="match status" value="1"/>
</dbReference>
<dbReference type="FunFam" id="3.30.160.810:FF:000001">
    <property type="entry name" value="50S ribosomal protein L3"/>
    <property type="match status" value="1"/>
</dbReference>
<dbReference type="Gene3D" id="3.30.160.810">
    <property type="match status" value="1"/>
</dbReference>
<dbReference type="Gene3D" id="2.40.30.10">
    <property type="entry name" value="Translation factors"/>
    <property type="match status" value="1"/>
</dbReference>
<dbReference type="HAMAP" id="MF_01325_B">
    <property type="entry name" value="Ribosomal_uL3_B"/>
    <property type="match status" value="1"/>
</dbReference>
<dbReference type="InterPro" id="IPR000597">
    <property type="entry name" value="Ribosomal_uL3"/>
</dbReference>
<dbReference type="InterPro" id="IPR019927">
    <property type="entry name" value="Ribosomal_uL3_bac/org-type"/>
</dbReference>
<dbReference type="InterPro" id="IPR019926">
    <property type="entry name" value="Ribosomal_uL3_CS"/>
</dbReference>
<dbReference type="InterPro" id="IPR009000">
    <property type="entry name" value="Transl_B-barrel_sf"/>
</dbReference>
<dbReference type="NCBIfam" id="TIGR03625">
    <property type="entry name" value="L3_bact"/>
    <property type="match status" value="1"/>
</dbReference>
<dbReference type="PANTHER" id="PTHR11229">
    <property type="entry name" value="50S RIBOSOMAL PROTEIN L3"/>
    <property type="match status" value="1"/>
</dbReference>
<dbReference type="PANTHER" id="PTHR11229:SF16">
    <property type="entry name" value="LARGE RIBOSOMAL SUBUNIT PROTEIN UL3C"/>
    <property type="match status" value="1"/>
</dbReference>
<dbReference type="Pfam" id="PF00297">
    <property type="entry name" value="Ribosomal_L3"/>
    <property type="match status" value="1"/>
</dbReference>
<dbReference type="SUPFAM" id="SSF50447">
    <property type="entry name" value="Translation proteins"/>
    <property type="match status" value="1"/>
</dbReference>
<dbReference type="PROSITE" id="PS00474">
    <property type="entry name" value="RIBOSOMAL_L3"/>
    <property type="match status" value="1"/>
</dbReference>
<sequence length="207" mass="22402">MTKGILGTKIGMTQIWKGDRAVPVTVVLAGPCPVVQRKTKLTDGYEAVQLGFAPKSEKRVNRPELGHFKKAGVAPMRFLREFRDFAPEGDTVNVDIFAEGEKIDATGTSKGKGTQGVMKRWNFAGGPASHGSKKWHRRPGSIGQRKTPGRVYKGKRMAGHMGMERVTVQNLEVVEVRADENLILVKGAIPGANGGLVMLRQAAKGGK</sequence>
<accession>Q1IX72</accession>
<organism>
    <name type="scientific">Deinococcus geothermalis (strain DSM 11300 / CIP 105573 / AG-3a)</name>
    <dbReference type="NCBI Taxonomy" id="319795"/>
    <lineage>
        <taxon>Bacteria</taxon>
        <taxon>Thermotogati</taxon>
        <taxon>Deinococcota</taxon>
        <taxon>Deinococci</taxon>
        <taxon>Deinococcales</taxon>
        <taxon>Deinococcaceae</taxon>
        <taxon>Deinococcus</taxon>
    </lineage>
</organism>
<evidence type="ECO:0000255" key="1">
    <source>
        <dbReference type="HAMAP-Rule" id="MF_01325"/>
    </source>
</evidence>
<evidence type="ECO:0000256" key="2">
    <source>
        <dbReference type="SAM" id="MobiDB-lite"/>
    </source>
</evidence>
<evidence type="ECO:0000305" key="3"/>